<keyword id="KW-1185">Reference proteome</keyword>
<keyword id="KW-0687">Ribonucleoprotein</keyword>
<keyword id="KW-0689">Ribosomal protein</keyword>
<keyword id="KW-0694">RNA-binding</keyword>
<keyword id="KW-0699">rRNA-binding</keyword>
<organism>
    <name type="scientific">Cupriavidus metallidurans (strain ATCC 43123 / DSM 2839 / NBRC 102507 / CH34)</name>
    <name type="common">Ralstonia metallidurans</name>
    <dbReference type="NCBI Taxonomy" id="266264"/>
    <lineage>
        <taxon>Bacteria</taxon>
        <taxon>Pseudomonadati</taxon>
        <taxon>Pseudomonadota</taxon>
        <taxon>Betaproteobacteria</taxon>
        <taxon>Burkholderiales</taxon>
        <taxon>Burkholderiaceae</taxon>
        <taxon>Cupriavidus</taxon>
    </lineage>
</organism>
<reference key="1">
    <citation type="journal article" date="2010" name="PLoS ONE">
        <title>The complete genome sequence of Cupriavidus metallidurans strain CH34, a master survivalist in harsh and anthropogenic environments.</title>
        <authorList>
            <person name="Janssen P.J."/>
            <person name="Van Houdt R."/>
            <person name="Moors H."/>
            <person name="Monsieurs P."/>
            <person name="Morin N."/>
            <person name="Michaux A."/>
            <person name="Benotmane M.A."/>
            <person name="Leys N."/>
            <person name="Vallaeys T."/>
            <person name="Lapidus A."/>
            <person name="Monchy S."/>
            <person name="Medigue C."/>
            <person name="Taghavi S."/>
            <person name="McCorkle S."/>
            <person name="Dunn J."/>
            <person name="van der Lelie D."/>
            <person name="Mergeay M."/>
        </authorList>
    </citation>
    <scope>NUCLEOTIDE SEQUENCE [LARGE SCALE GENOMIC DNA]</scope>
    <source>
        <strain>ATCC 43123 / DSM 2839 / NBRC 102507 / CH34</strain>
    </source>
</reference>
<name>RL14_CUPMC</name>
<protein>
    <recommendedName>
        <fullName evidence="1">Large ribosomal subunit protein uL14</fullName>
    </recommendedName>
    <alternativeName>
        <fullName evidence="2">50S ribosomal protein L14</fullName>
    </alternativeName>
</protein>
<evidence type="ECO:0000255" key="1">
    <source>
        <dbReference type="HAMAP-Rule" id="MF_01367"/>
    </source>
</evidence>
<evidence type="ECO:0000305" key="2"/>
<comment type="function">
    <text evidence="1">Binds to 23S rRNA. Forms part of two intersubunit bridges in the 70S ribosome.</text>
</comment>
<comment type="subunit">
    <text evidence="1">Part of the 50S ribosomal subunit. Forms a cluster with proteins L3 and L19. In the 70S ribosome, L14 and L19 interact and together make contacts with the 16S rRNA in bridges B5 and B8.</text>
</comment>
<comment type="similarity">
    <text evidence="1">Belongs to the universal ribosomal protein uL14 family.</text>
</comment>
<gene>
    <name evidence="1" type="primary">rplN</name>
    <name type="ordered locus">Rmet_3307</name>
</gene>
<sequence>MIQTESRLEVADNTGAREVLCIKVLGGSKRRYASVGDIIKVTVKDAAPRGRVKKGDIYNAVVVRTAKGVRRADGSLVKFDGNAAVLLNNKLEPIGTRIFGPVTRELRTERFMKIVSLAPEVL</sequence>
<proteinExistence type="inferred from homology"/>
<feature type="chain" id="PRO_0000266535" description="Large ribosomal subunit protein uL14">
    <location>
        <begin position="1"/>
        <end position="122"/>
    </location>
</feature>
<accession>Q1LI47</accession>
<dbReference type="EMBL" id="CP000352">
    <property type="protein sequence ID" value="ABF10179.1"/>
    <property type="molecule type" value="Genomic_DNA"/>
</dbReference>
<dbReference type="RefSeq" id="WP_006576237.1">
    <property type="nucleotide sequence ID" value="NC_007973.1"/>
</dbReference>
<dbReference type="SMR" id="Q1LI47"/>
<dbReference type="STRING" id="266264.Rmet_3307"/>
<dbReference type="GeneID" id="98344076"/>
<dbReference type="KEGG" id="rme:Rmet_3307"/>
<dbReference type="eggNOG" id="COG0093">
    <property type="taxonomic scope" value="Bacteria"/>
</dbReference>
<dbReference type="HOGENOM" id="CLU_095071_2_1_4"/>
<dbReference type="Proteomes" id="UP000002429">
    <property type="component" value="Chromosome"/>
</dbReference>
<dbReference type="GO" id="GO:0022625">
    <property type="term" value="C:cytosolic large ribosomal subunit"/>
    <property type="evidence" value="ECO:0007669"/>
    <property type="project" value="TreeGrafter"/>
</dbReference>
<dbReference type="GO" id="GO:0070180">
    <property type="term" value="F:large ribosomal subunit rRNA binding"/>
    <property type="evidence" value="ECO:0007669"/>
    <property type="project" value="TreeGrafter"/>
</dbReference>
<dbReference type="GO" id="GO:0003735">
    <property type="term" value="F:structural constituent of ribosome"/>
    <property type="evidence" value="ECO:0007669"/>
    <property type="project" value="InterPro"/>
</dbReference>
<dbReference type="GO" id="GO:0006412">
    <property type="term" value="P:translation"/>
    <property type="evidence" value="ECO:0007669"/>
    <property type="project" value="UniProtKB-UniRule"/>
</dbReference>
<dbReference type="CDD" id="cd00337">
    <property type="entry name" value="Ribosomal_uL14"/>
    <property type="match status" value="1"/>
</dbReference>
<dbReference type="FunFam" id="2.40.150.20:FF:000001">
    <property type="entry name" value="50S ribosomal protein L14"/>
    <property type="match status" value="1"/>
</dbReference>
<dbReference type="Gene3D" id="2.40.150.20">
    <property type="entry name" value="Ribosomal protein L14"/>
    <property type="match status" value="1"/>
</dbReference>
<dbReference type="HAMAP" id="MF_01367">
    <property type="entry name" value="Ribosomal_uL14"/>
    <property type="match status" value="1"/>
</dbReference>
<dbReference type="InterPro" id="IPR000218">
    <property type="entry name" value="Ribosomal_uL14"/>
</dbReference>
<dbReference type="InterPro" id="IPR005745">
    <property type="entry name" value="Ribosomal_uL14_bac-type"/>
</dbReference>
<dbReference type="InterPro" id="IPR019972">
    <property type="entry name" value="Ribosomal_uL14_CS"/>
</dbReference>
<dbReference type="InterPro" id="IPR036853">
    <property type="entry name" value="Ribosomal_uL14_sf"/>
</dbReference>
<dbReference type="NCBIfam" id="TIGR01067">
    <property type="entry name" value="rplN_bact"/>
    <property type="match status" value="1"/>
</dbReference>
<dbReference type="PANTHER" id="PTHR11761">
    <property type="entry name" value="50S/60S RIBOSOMAL PROTEIN L14/L23"/>
    <property type="match status" value="1"/>
</dbReference>
<dbReference type="PANTHER" id="PTHR11761:SF3">
    <property type="entry name" value="LARGE RIBOSOMAL SUBUNIT PROTEIN UL14M"/>
    <property type="match status" value="1"/>
</dbReference>
<dbReference type="Pfam" id="PF00238">
    <property type="entry name" value="Ribosomal_L14"/>
    <property type="match status" value="1"/>
</dbReference>
<dbReference type="SMART" id="SM01374">
    <property type="entry name" value="Ribosomal_L14"/>
    <property type="match status" value="1"/>
</dbReference>
<dbReference type="SUPFAM" id="SSF50193">
    <property type="entry name" value="Ribosomal protein L14"/>
    <property type="match status" value="1"/>
</dbReference>
<dbReference type="PROSITE" id="PS00049">
    <property type="entry name" value="RIBOSOMAL_L14"/>
    <property type="match status" value="1"/>
</dbReference>